<organism>
    <name type="scientific">Caenorhabditis elegans</name>
    <dbReference type="NCBI Taxonomy" id="6239"/>
    <lineage>
        <taxon>Eukaryota</taxon>
        <taxon>Metazoa</taxon>
        <taxon>Ecdysozoa</taxon>
        <taxon>Nematoda</taxon>
        <taxon>Chromadorea</taxon>
        <taxon>Rhabditida</taxon>
        <taxon>Rhabditina</taxon>
        <taxon>Rhabditomorpha</taxon>
        <taxon>Rhabditoidea</taxon>
        <taxon>Rhabditidae</taxon>
        <taxon>Peloderinae</taxon>
        <taxon>Caenorhabditis</taxon>
    </lineage>
</organism>
<protein>
    <recommendedName>
        <fullName>T-box transcription factor tbx-8</fullName>
    </recommendedName>
</protein>
<keyword id="KW-0217">Developmental protein</keyword>
<keyword id="KW-0238">DNA-binding</keyword>
<keyword id="KW-0539">Nucleus</keyword>
<keyword id="KW-1185">Reference proteome</keyword>
<keyword id="KW-0804">Transcription</keyword>
<keyword id="KW-0805">Transcription regulation</keyword>
<sequence>MTDQVYVTLREDQDKLWNLFHYHKNEMIVTKSGRKMFPKLEYVVRGLTPNKLYAMMLHIEPSDDHRYKFSSGEWVKSGKAEKHREPKKLWHADGVRSGKEWMTNPVCFDRVKITNCAESTNASMIFLHSMHKYTPVMSIYESPSESPFSVPQPSTRLVTSVRLTYTEFIAVTAYQNDAVIKLKIKFNPFAKGFREGSQSDRKRNSPSADDSTTDESSSQVSSPQPKKSRTVSVSPPLMPRILPTMIPPPPAINPLFYSLPYFSHLAATGNFPPVPFQFPFGLPCFSPMSFPTPPPSLKNVKKEEQEDIEQEINVV</sequence>
<feature type="chain" id="PRO_0000184471" description="T-box transcription factor tbx-8">
    <location>
        <begin position="1"/>
        <end position="315"/>
    </location>
</feature>
<feature type="DNA-binding region" description="T-box" evidence="2">
    <location>
        <begin position="11"/>
        <end position="195"/>
    </location>
</feature>
<feature type="region of interest" description="Disordered" evidence="4">
    <location>
        <begin position="193"/>
        <end position="235"/>
    </location>
</feature>
<feature type="region of interest" description="Disordered" evidence="4">
    <location>
        <begin position="293"/>
        <end position="315"/>
    </location>
</feature>
<feature type="compositionally biased region" description="Basic and acidic residues" evidence="4">
    <location>
        <begin position="193"/>
        <end position="203"/>
    </location>
</feature>
<feature type="compositionally biased region" description="Low complexity" evidence="4">
    <location>
        <begin position="205"/>
        <end position="225"/>
    </location>
</feature>
<feature type="compositionally biased region" description="Acidic residues" evidence="4">
    <location>
        <begin position="305"/>
        <end position="315"/>
    </location>
</feature>
<name>TBX8_CAEEL</name>
<reference key="1">
    <citation type="journal article" date="2004" name="Genes Cells">
        <title>Caenorhabditis elegans T-box genes tbx-9 and tbx-8 are required for formation of hypodermis and body-wall muscle in embryogenesis.</title>
        <authorList>
            <person name="Andachi Y."/>
        </authorList>
    </citation>
    <scope>NUCLEOTIDE SEQUENCE [MRNA]</scope>
    <scope>FUNCTION</scope>
    <scope>SUBCELLULAR LOCATION</scope>
    <scope>DEVELOPMENTAL STAGE</scope>
    <source>
        <strain>Bristol N2</strain>
        <tissue>Embryo</tissue>
    </source>
</reference>
<reference key="2">
    <citation type="journal article" date="1998" name="Science">
        <title>Genome sequence of the nematode C. elegans: a platform for investigating biology.</title>
        <authorList>
            <consortium name="The C. elegans sequencing consortium"/>
        </authorList>
    </citation>
    <scope>NUCLEOTIDE SEQUENCE [LARGE SCALE GENOMIC DNA]</scope>
    <source>
        <strain>Bristol N2</strain>
    </source>
</reference>
<reference key="3">
    <citation type="journal article" date="2004" name="Development">
        <title>A regulatory network of T-box genes and the even-skipped homologue vab-7 controls patterning and morphogenesis in C. elegans.</title>
        <authorList>
            <person name="Pocock R."/>
            <person name="Ahringer J."/>
            <person name="Mitsch M."/>
            <person name="Maxwell S."/>
            <person name="Woollard A."/>
        </authorList>
    </citation>
    <scope>FUNCTION</scope>
    <scope>SUBCELLULAR LOCATION</scope>
    <scope>DEVELOPMENTAL STAGE</scope>
    <scope>DISRUPTION PHENOTYPE</scope>
</reference>
<reference key="4">
    <citation type="journal article" date="2005" name="Genome Biol.">
        <title>Synthetic lethal analysis of Caenorhabditis elegans posterior embryonic patterning genes identifies conserved genetic interactions.</title>
        <authorList>
            <person name="Baugh L.R."/>
            <person name="Wen J.C."/>
            <person name="Hill A.A."/>
            <person name="Slonim D.K."/>
            <person name="Brown E.L."/>
            <person name="Hunter C.P."/>
        </authorList>
    </citation>
    <scope>DISRUPTION PHENOTYPE</scope>
</reference>
<proteinExistence type="evidence at transcript level"/>
<gene>
    <name type="primary">tbx-8</name>
    <name type="ORF">T07C4.2</name>
</gene>
<accession>Q22292</accession>
<accession>Q75WK3</accession>
<dbReference type="EMBL" id="AB121091">
    <property type="protein sequence ID" value="BAD14918.1"/>
    <property type="molecule type" value="mRNA"/>
</dbReference>
<dbReference type="EMBL" id="Z29443">
    <property type="protein sequence ID" value="CAA82578.2"/>
    <property type="molecule type" value="Genomic_DNA"/>
</dbReference>
<dbReference type="PIR" id="C88579">
    <property type="entry name" value="C88579"/>
</dbReference>
<dbReference type="RefSeq" id="NP_499287.2">
    <property type="nucleotide sequence ID" value="NM_066886.6"/>
</dbReference>
<dbReference type="SMR" id="Q22292"/>
<dbReference type="BioGRID" id="41643">
    <property type="interactions" value="23"/>
</dbReference>
<dbReference type="FunCoup" id="Q22292">
    <property type="interactions" value="10"/>
</dbReference>
<dbReference type="IntAct" id="Q22292">
    <property type="interactions" value="23"/>
</dbReference>
<dbReference type="STRING" id="6239.T07C4.2.1"/>
<dbReference type="PaxDb" id="6239-T07C4.2"/>
<dbReference type="EnsemblMetazoa" id="T07C4.2.1">
    <property type="protein sequence ID" value="T07C4.2.1"/>
    <property type="gene ID" value="WBGene00006545"/>
</dbReference>
<dbReference type="EnsemblMetazoa" id="T07C4.2.2">
    <property type="protein sequence ID" value="T07C4.2.2"/>
    <property type="gene ID" value="WBGene00006545"/>
</dbReference>
<dbReference type="GeneID" id="176450"/>
<dbReference type="KEGG" id="cel:CELE_T07C4.2"/>
<dbReference type="UCSC" id="T07C4.2">
    <property type="organism name" value="c. elegans"/>
</dbReference>
<dbReference type="AGR" id="WB:WBGene00006545"/>
<dbReference type="CTD" id="176450"/>
<dbReference type="WormBase" id="T07C4.2">
    <property type="protein sequence ID" value="CE36891"/>
    <property type="gene ID" value="WBGene00006545"/>
    <property type="gene designation" value="tbx-8"/>
</dbReference>
<dbReference type="eggNOG" id="KOG3585">
    <property type="taxonomic scope" value="Eukaryota"/>
</dbReference>
<dbReference type="GeneTree" id="ENSGT00970000196046"/>
<dbReference type="HOGENOM" id="CLU_032588_1_0_1"/>
<dbReference type="InParanoid" id="Q22292"/>
<dbReference type="OMA" id="DPEPWCG"/>
<dbReference type="OrthoDB" id="7442607at2759"/>
<dbReference type="PhylomeDB" id="Q22292"/>
<dbReference type="SignaLink" id="Q22292"/>
<dbReference type="PRO" id="PR:Q22292"/>
<dbReference type="Proteomes" id="UP000001940">
    <property type="component" value="Chromosome III"/>
</dbReference>
<dbReference type="Bgee" id="WBGene00006545">
    <property type="expression patterns" value="Expressed in embryo and 18 other cell types or tissues"/>
</dbReference>
<dbReference type="GO" id="GO:0000785">
    <property type="term" value="C:chromatin"/>
    <property type="evidence" value="ECO:0000318"/>
    <property type="project" value="GO_Central"/>
</dbReference>
<dbReference type="GO" id="GO:0005634">
    <property type="term" value="C:nucleus"/>
    <property type="evidence" value="ECO:0000314"/>
    <property type="project" value="UniProtKB"/>
</dbReference>
<dbReference type="GO" id="GO:0005667">
    <property type="term" value="C:transcription regulator complex"/>
    <property type="evidence" value="ECO:0000250"/>
    <property type="project" value="WormBase"/>
</dbReference>
<dbReference type="GO" id="GO:0003677">
    <property type="term" value="F:DNA binding"/>
    <property type="evidence" value="ECO:0000303"/>
    <property type="project" value="UniProtKB"/>
</dbReference>
<dbReference type="GO" id="GO:0003700">
    <property type="term" value="F:DNA-binding transcription factor activity"/>
    <property type="evidence" value="ECO:0000303"/>
    <property type="project" value="UniProtKB"/>
</dbReference>
<dbReference type="GO" id="GO:0000981">
    <property type="term" value="F:DNA-binding transcription factor activity, RNA polymerase II-specific"/>
    <property type="evidence" value="ECO:0000250"/>
    <property type="project" value="WormBase"/>
</dbReference>
<dbReference type="GO" id="GO:0000978">
    <property type="term" value="F:RNA polymerase II cis-regulatory region sequence-specific DNA binding"/>
    <property type="evidence" value="ECO:0000318"/>
    <property type="project" value="GO_Central"/>
</dbReference>
<dbReference type="GO" id="GO:0001708">
    <property type="term" value="P:cell fate specification"/>
    <property type="evidence" value="ECO:0000318"/>
    <property type="project" value="GO_Central"/>
</dbReference>
<dbReference type="GO" id="GO:0010172">
    <property type="term" value="P:embryonic body morphogenesis"/>
    <property type="evidence" value="ECO:0000315"/>
    <property type="project" value="UniProtKB"/>
</dbReference>
<dbReference type="GO" id="GO:0045893">
    <property type="term" value="P:positive regulation of DNA-templated transcription"/>
    <property type="evidence" value="ECO:0007669"/>
    <property type="project" value="InterPro"/>
</dbReference>
<dbReference type="GO" id="GO:0006355">
    <property type="term" value="P:regulation of DNA-templated transcription"/>
    <property type="evidence" value="ECO:0000303"/>
    <property type="project" value="UniProtKB"/>
</dbReference>
<dbReference type="GO" id="GO:0006357">
    <property type="term" value="P:regulation of transcription by RNA polymerase II"/>
    <property type="evidence" value="ECO:0000250"/>
    <property type="project" value="WormBase"/>
</dbReference>
<dbReference type="CDD" id="cd00182">
    <property type="entry name" value="T-box"/>
    <property type="match status" value="1"/>
</dbReference>
<dbReference type="FunFam" id="2.60.40.820:FF:000013">
    <property type="entry name" value="T-box transcription factor tbx-9"/>
    <property type="match status" value="1"/>
</dbReference>
<dbReference type="Gene3D" id="2.60.40.820">
    <property type="entry name" value="Transcription factor, T-box"/>
    <property type="match status" value="1"/>
</dbReference>
<dbReference type="InterPro" id="IPR008967">
    <property type="entry name" value="p53-like_TF_DNA-bd_sf"/>
</dbReference>
<dbReference type="InterPro" id="IPR046360">
    <property type="entry name" value="T-box_DNA-bd"/>
</dbReference>
<dbReference type="InterPro" id="IPR036960">
    <property type="entry name" value="T-box_sf"/>
</dbReference>
<dbReference type="InterPro" id="IPR001699">
    <property type="entry name" value="TF_T-box"/>
</dbReference>
<dbReference type="InterPro" id="IPR018186">
    <property type="entry name" value="TF_T-box_CS"/>
</dbReference>
<dbReference type="PANTHER" id="PTHR11267:SF170">
    <property type="entry name" value="T-BOX PROTEIN 33-RELATED"/>
    <property type="match status" value="1"/>
</dbReference>
<dbReference type="PANTHER" id="PTHR11267">
    <property type="entry name" value="T-BOX PROTEIN-RELATED"/>
    <property type="match status" value="1"/>
</dbReference>
<dbReference type="Pfam" id="PF00907">
    <property type="entry name" value="T-box"/>
    <property type="match status" value="1"/>
</dbReference>
<dbReference type="PRINTS" id="PR00937">
    <property type="entry name" value="TBOX"/>
</dbReference>
<dbReference type="SMART" id="SM00425">
    <property type="entry name" value="TBOX"/>
    <property type="match status" value="1"/>
</dbReference>
<dbReference type="SUPFAM" id="SSF49417">
    <property type="entry name" value="p53-like transcription factors"/>
    <property type="match status" value="1"/>
</dbReference>
<dbReference type="PROSITE" id="PS01283">
    <property type="entry name" value="TBOX_1"/>
    <property type="match status" value="1"/>
</dbReference>
<dbReference type="PROSITE" id="PS01264">
    <property type="entry name" value="TBOX_2"/>
    <property type="match status" value="1"/>
</dbReference>
<dbReference type="PROSITE" id="PS50252">
    <property type="entry name" value="TBOX_3"/>
    <property type="match status" value="1"/>
</dbReference>
<evidence type="ECO:0000250" key="1">
    <source>
        <dbReference type="UniProtKB" id="Q16650"/>
    </source>
</evidence>
<evidence type="ECO:0000255" key="2">
    <source>
        <dbReference type="PROSITE-ProRule" id="PRU00201"/>
    </source>
</evidence>
<evidence type="ECO:0000255" key="3">
    <source>
        <dbReference type="PROSITE-ProRule" id="PRU00251"/>
    </source>
</evidence>
<evidence type="ECO:0000256" key="4">
    <source>
        <dbReference type="SAM" id="MobiDB-lite"/>
    </source>
</evidence>
<evidence type="ECO:0000269" key="5">
    <source>
    </source>
</evidence>
<evidence type="ECO:0000269" key="6">
    <source>
    </source>
</evidence>
<evidence type="ECO:0000269" key="7">
    <source>
    </source>
</evidence>
<comment type="function">
    <text evidence="1 5 6">Transcription factor (By similarity). Involved in the control of early morphogenesis of the intestine, hypodermis and body-wall muscle (PubMed:15066124, PubMed:15102704). Involved in regulating expression of vab-7 (PubMed:15102704). Appears to have partially redundant function to tbx-9 (PubMed:15066124).</text>
</comment>
<comment type="subcellular location">
    <subcellularLocation>
        <location evidence="3 5 6">Nucleus</location>
    </subcellularLocation>
</comment>
<comment type="developmental stage">
    <text evidence="5 6">Expressed during morphogenesis in the hypodermis, body-wall muscle, intestine and dorsal, lateral and ventral hypodermal cells (PubMed:15066124, PubMed:15102704). First detected in the Ea and Ep cells until the 24 cell stage (PubMed:15066124, PubMed:15102704). At the 24 cell stage detected in 5 cells including AB descendant cells and also the Ca and Cp cells (PubMed:15066124). At the 200 cell stage, detected in two pairs of MS descendant cells (PubMed:15066124). Thereafter detected in a subset of cells at each stage up to approximately the 400 cell stage, becoming undetectable just before morphogenesis (PubMed:15066124). During morphogenesis detected in the hypodermis, body-wall muscle, intestine and dorsal, lateral and ventral hypodermal cells up until early L1 larval stage (PubMed:15066124, PubMed:15102704).</text>
</comment>
<comment type="disruption phenotype">
    <text evidence="6 7">RNAi-mediated knockdown causes about 5% embryonic lethality with 1-10% of hatching larvae displaying posterior morphological defects (PubMed:15102704, PubMed:15892873). Defective intercalation of dorsal hypodermis (PubMed:15102704). Simultaneous RNAi-mediated knockdown of tbx-9 causes at least 48% of embryos to fail to hatch and those that do display severe morphological defects and die as larvae (PubMed:15102704, PubMed:15892873). Simultaneous RNAi-mediated knockdown of tbx-9 abolishes muscle expression of vab-7 (PubMed:15102704).</text>
</comment>